<dbReference type="EMBL" id="DQ897681">
    <property type="protein sequence ID" value="ABI17366.1"/>
    <property type="molecule type" value="Genomic_DNA"/>
</dbReference>
<dbReference type="EMBL" id="DQ897681">
    <property type="protein sequence ID" value="ABI17272.1"/>
    <property type="molecule type" value="Genomic_DNA"/>
</dbReference>
<dbReference type="RefSeq" id="YP_784081.1">
    <property type="nucleotide sequence ID" value="NC_008454.1"/>
</dbReference>
<dbReference type="RefSeq" id="YP_784175.1">
    <property type="nucleotide sequence ID" value="NC_008454.1"/>
</dbReference>
<dbReference type="SMR" id="Q06FK6"/>
<dbReference type="GeneID" id="4362849"/>
<dbReference type="GeneID" id="4362915"/>
<dbReference type="GO" id="GO:0009535">
    <property type="term" value="C:chloroplast thylakoid membrane"/>
    <property type="evidence" value="ECO:0007669"/>
    <property type="project" value="UniProtKB-SubCell"/>
</dbReference>
<dbReference type="GO" id="GO:0009522">
    <property type="term" value="C:photosystem I"/>
    <property type="evidence" value="ECO:0007669"/>
    <property type="project" value="UniProtKB-KW"/>
</dbReference>
<dbReference type="GO" id="GO:0015979">
    <property type="term" value="P:photosynthesis"/>
    <property type="evidence" value="ECO:0007669"/>
    <property type="project" value="UniProtKB-UniRule"/>
</dbReference>
<dbReference type="FunFam" id="1.20.5.510:FF:000001">
    <property type="entry name" value="Photosystem I reaction center subunit IX"/>
    <property type="match status" value="1"/>
</dbReference>
<dbReference type="Gene3D" id="1.20.5.510">
    <property type="entry name" value="Single helix bin"/>
    <property type="match status" value="1"/>
</dbReference>
<dbReference type="HAMAP" id="MF_00522">
    <property type="entry name" value="PSI_PsaJ"/>
    <property type="match status" value="1"/>
</dbReference>
<dbReference type="InterPro" id="IPR002615">
    <property type="entry name" value="PSI_PsaJ"/>
</dbReference>
<dbReference type="InterPro" id="IPR036062">
    <property type="entry name" value="PSI_PsaJ_sf"/>
</dbReference>
<dbReference type="PANTHER" id="PTHR36082">
    <property type="match status" value="1"/>
</dbReference>
<dbReference type="PANTHER" id="PTHR36082:SF2">
    <property type="entry name" value="PHOTOSYSTEM I REACTION CENTER SUBUNIT IX"/>
    <property type="match status" value="1"/>
</dbReference>
<dbReference type="Pfam" id="PF01701">
    <property type="entry name" value="PSI_PsaJ"/>
    <property type="match status" value="1"/>
</dbReference>
<dbReference type="SUPFAM" id="SSF81544">
    <property type="entry name" value="Subunit IX of photosystem I reaction centre, PsaJ"/>
    <property type="match status" value="1"/>
</dbReference>
<proteinExistence type="inferred from homology"/>
<reference key="1">
    <citation type="journal article" date="2006" name="Mol. Biol. Evol.">
        <title>The complete chloroplast genome sequence of Pelargonium x hortorum: organization and evolution of the largest and most highly rearranged chloroplast genome of land plants.</title>
        <authorList>
            <person name="Chumley T.W."/>
            <person name="Palmer J.D."/>
            <person name="Mower J.P."/>
            <person name="Fourcade H.M."/>
            <person name="Calie P.J."/>
            <person name="Boore J.L."/>
            <person name="Jansen R.K."/>
        </authorList>
    </citation>
    <scope>NUCLEOTIDE SEQUENCE [LARGE SCALE GENOMIC DNA]</scope>
    <source>
        <strain>cv. Ringo White</strain>
    </source>
</reference>
<comment type="function">
    <text evidence="1">May help in the organization of the PsaE and PsaF subunits.</text>
</comment>
<comment type="subcellular location">
    <subcellularLocation>
        <location evidence="1">Plastid</location>
        <location evidence="1">Chloroplast thylakoid membrane</location>
        <topology evidence="1">Single-pass membrane protein</topology>
    </subcellularLocation>
</comment>
<comment type="similarity">
    <text evidence="1">Belongs to the PsaJ family.</text>
</comment>
<geneLocation type="chloroplast"/>
<gene>
    <name evidence="1" type="primary">psaJ</name>
</gene>
<organism>
    <name type="scientific">Pelargonium hortorum</name>
    <name type="common">Common geranium</name>
    <name type="synonym">Pelargonium inquinans x Pelargonium zonale</name>
    <dbReference type="NCBI Taxonomy" id="4031"/>
    <lineage>
        <taxon>Eukaryota</taxon>
        <taxon>Viridiplantae</taxon>
        <taxon>Streptophyta</taxon>
        <taxon>Embryophyta</taxon>
        <taxon>Tracheophyta</taxon>
        <taxon>Spermatophyta</taxon>
        <taxon>Magnoliopsida</taxon>
        <taxon>eudicotyledons</taxon>
        <taxon>Gunneridae</taxon>
        <taxon>Pentapetalae</taxon>
        <taxon>rosids</taxon>
        <taxon>malvids</taxon>
        <taxon>Geraniales</taxon>
        <taxon>Geraniaceae</taxon>
        <taxon>Pelargonium</taxon>
    </lineage>
</organism>
<accession>Q06FK6</accession>
<sequence length="44" mass="4999">MRDLKTYLSAAPVLSTIWFGALAGLLIEINRFFPDALTFPFFSF</sequence>
<evidence type="ECO:0000255" key="1">
    <source>
        <dbReference type="HAMAP-Rule" id="MF_00522"/>
    </source>
</evidence>
<protein>
    <recommendedName>
        <fullName evidence="1">Photosystem I reaction center subunit IX</fullName>
    </recommendedName>
    <alternativeName>
        <fullName evidence="1">PSI-J</fullName>
    </alternativeName>
</protein>
<name>PSAJ_PELHO</name>
<feature type="chain" id="PRO_0000276069" description="Photosystem I reaction center subunit IX">
    <location>
        <begin position="1"/>
        <end position="44"/>
    </location>
</feature>
<feature type="transmembrane region" description="Helical" evidence="1">
    <location>
        <begin position="7"/>
        <end position="27"/>
    </location>
</feature>
<keyword id="KW-0150">Chloroplast</keyword>
<keyword id="KW-0472">Membrane</keyword>
<keyword id="KW-0602">Photosynthesis</keyword>
<keyword id="KW-0603">Photosystem I</keyword>
<keyword id="KW-0934">Plastid</keyword>
<keyword id="KW-0793">Thylakoid</keyword>
<keyword id="KW-0812">Transmembrane</keyword>
<keyword id="KW-1133">Transmembrane helix</keyword>